<evidence type="ECO:0000255" key="1">
    <source>
        <dbReference type="HAMAP-Rule" id="MF_03130"/>
    </source>
</evidence>
<organism>
    <name type="scientific">Schistosoma japonicum</name>
    <name type="common">Blood fluke</name>
    <dbReference type="NCBI Taxonomy" id="6182"/>
    <lineage>
        <taxon>Eukaryota</taxon>
        <taxon>Metazoa</taxon>
        <taxon>Spiralia</taxon>
        <taxon>Lophotrochozoa</taxon>
        <taxon>Platyhelminthes</taxon>
        <taxon>Trematoda</taxon>
        <taxon>Digenea</taxon>
        <taxon>Strigeidida</taxon>
        <taxon>Schistosomatoidea</taxon>
        <taxon>Schistosomatidae</taxon>
        <taxon>Schistosoma</taxon>
    </lineage>
</organism>
<comment type="function">
    <text evidence="1">Specifically acetylates 'Lys-40' in alpha-tubulin on the lumenal side of microtubules. Promotes microtubule destabilization and accelerates microtubule dynamics; this activity may be independent of acetylation activity. Acetylates alpha-tubulin with a slow enzymatic rate, due to a catalytic site that is not optimized for acetyl transfer. Enters the microtubule through each end and diffuses quickly throughout the lumen of microtubules. Acetylates only long/old microtubules because of its slow acetylation rate since it does not have time to act on dynamically unstable microtubules before the enzyme is released.</text>
</comment>
<comment type="catalytic activity">
    <reaction evidence="1">
        <text>L-lysyl-[alpha-tubulin] + acetyl-CoA = N(6)-acetyl-L-lysyl-[alpha-tubulin] + CoA + H(+)</text>
        <dbReference type="Rhea" id="RHEA:15277"/>
        <dbReference type="Rhea" id="RHEA-COMP:11278"/>
        <dbReference type="Rhea" id="RHEA-COMP:11279"/>
        <dbReference type="ChEBI" id="CHEBI:15378"/>
        <dbReference type="ChEBI" id="CHEBI:29969"/>
        <dbReference type="ChEBI" id="CHEBI:57287"/>
        <dbReference type="ChEBI" id="CHEBI:57288"/>
        <dbReference type="ChEBI" id="CHEBI:61930"/>
        <dbReference type="EC" id="2.3.1.108"/>
    </reaction>
</comment>
<comment type="similarity">
    <text evidence="1">Belongs to the acetyltransferase ATAT1 family.</text>
</comment>
<accession>Q5DD96</accession>
<gene>
    <name type="ORF">SJCHGC00609</name>
</gene>
<dbReference type="EC" id="2.3.1.108" evidence="1"/>
<dbReference type="EMBL" id="AY814478">
    <property type="protein sequence ID" value="AAW26210.1"/>
    <property type="molecule type" value="mRNA"/>
</dbReference>
<dbReference type="SMR" id="Q5DD96"/>
<dbReference type="GO" id="GO:0005874">
    <property type="term" value="C:microtubule"/>
    <property type="evidence" value="ECO:0007669"/>
    <property type="project" value="InterPro"/>
</dbReference>
<dbReference type="GO" id="GO:0019799">
    <property type="term" value="F:tubulin N-acetyltransferase activity"/>
    <property type="evidence" value="ECO:0007669"/>
    <property type="project" value="UniProtKB-UniRule"/>
</dbReference>
<dbReference type="GO" id="GO:0048666">
    <property type="term" value="P:neuron development"/>
    <property type="evidence" value="ECO:0007669"/>
    <property type="project" value="UniProtKB-UniRule"/>
</dbReference>
<dbReference type="GO" id="GO:0070507">
    <property type="term" value="P:regulation of microtubule cytoskeleton organization"/>
    <property type="evidence" value="ECO:0007669"/>
    <property type="project" value="UniProtKB-UniRule"/>
</dbReference>
<dbReference type="CDD" id="cd04301">
    <property type="entry name" value="NAT_SF"/>
    <property type="match status" value="1"/>
</dbReference>
<dbReference type="Gene3D" id="3.40.630.30">
    <property type="match status" value="1"/>
</dbReference>
<dbReference type="HAMAP" id="MF_03130">
    <property type="entry name" value="mec17"/>
    <property type="match status" value="1"/>
</dbReference>
<dbReference type="InterPro" id="IPR016181">
    <property type="entry name" value="Acyl_CoA_acyltransferase"/>
</dbReference>
<dbReference type="InterPro" id="IPR038746">
    <property type="entry name" value="Atat"/>
</dbReference>
<dbReference type="InterPro" id="IPR007965">
    <property type="entry name" value="GNAT_ATAT"/>
</dbReference>
<dbReference type="PANTHER" id="PTHR12327">
    <property type="entry name" value="ALPHA-TUBULIN N-ACETYLTRANSFERASE 1"/>
    <property type="match status" value="1"/>
</dbReference>
<dbReference type="PANTHER" id="PTHR12327:SF0">
    <property type="entry name" value="ALPHA-TUBULIN N-ACETYLTRANSFERASE 1"/>
    <property type="match status" value="1"/>
</dbReference>
<dbReference type="Pfam" id="PF05301">
    <property type="entry name" value="Acetyltransf_16"/>
    <property type="match status" value="1"/>
</dbReference>
<dbReference type="SUPFAM" id="SSF55729">
    <property type="entry name" value="Acyl-CoA N-acyltransferases (Nat)"/>
    <property type="match status" value="1"/>
</dbReference>
<dbReference type="PROSITE" id="PS51730">
    <property type="entry name" value="GNAT_ATAT"/>
    <property type="match status" value="1"/>
</dbReference>
<name>ATAT_SCHJA</name>
<proteinExistence type="evidence at transcript level"/>
<keyword id="KW-0012">Acyltransferase</keyword>
<keyword id="KW-0808">Transferase</keyword>
<sequence>MDFRAGLENVLQQEVTVIHGEETRKLCIANNKYLNGKDADTFRNLAVLLDHLGERSAKAQKLPKPVTSFIKFRNSDQSIFLLSDIPVKKFVILIYMFFRVLGFLKVGRKRLFVHDSKGVCVECIPLCILDFYIHESHQRKGYGKKLFDFMLKTENIQPSYLAIDLPSMKMIQFLHKHYHLINPIYSPNNFVVYSEFFNNLNNSNYSIVQSKLTTTNCFLKSNSSRIHQNKHNHSIVSNNNNNNNNNIIIIIIIQNITHHNNQLTIEQ</sequence>
<reference key="1">
    <citation type="journal article" date="2006" name="PLoS Pathog.">
        <title>New perspectives on host-parasite interplay by comparative transcriptomic and proteomic analyses of Schistosoma japonicum.</title>
        <authorList>
            <person name="Liu F."/>
            <person name="Lu J."/>
            <person name="Hu W."/>
            <person name="Wang S.-Y."/>
            <person name="Cui S.-J."/>
            <person name="Chi M."/>
            <person name="Yan Q."/>
            <person name="Wang X.-R."/>
            <person name="Song H.-D."/>
            <person name="Xu X.-N."/>
            <person name="Wang J.-J."/>
            <person name="Zhang X.-L."/>
            <person name="Zhang X."/>
            <person name="Wang Z.-Q."/>
            <person name="Xue C.-L."/>
            <person name="Brindley P.J."/>
            <person name="McManus D.P."/>
            <person name="Yang P.-Y."/>
            <person name="Feng Z."/>
            <person name="Chen Z."/>
            <person name="Han Z.-G."/>
        </authorList>
    </citation>
    <scope>NUCLEOTIDE SEQUENCE [LARGE SCALE MRNA]</scope>
</reference>
<protein>
    <recommendedName>
        <fullName evidence="1">Alpha-tubulin N-acetyltransferase</fullName>
        <shortName evidence="1">Alpha-TAT</shortName>
        <shortName evidence="1">TAT</shortName>
        <ecNumber evidence="1">2.3.1.108</ecNumber>
    </recommendedName>
    <alternativeName>
        <fullName evidence="1">Acetyltransferase mec-17 homolog</fullName>
    </alternativeName>
</protein>
<feature type="chain" id="PRO_0000402077" description="Alpha-tubulin N-acetyltransferase">
    <location>
        <begin position="1"/>
        <end position="267"/>
    </location>
</feature>
<feature type="domain" description="N-acetyltransferase" evidence="1">
    <location>
        <begin position="1"/>
        <end position="197"/>
    </location>
</feature>
<feature type="binding site" evidence="1">
    <location>
        <begin position="131"/>
        <end position="144"/>
    </location>
    <ligand>
        <name>acetyl-CoA</name>
        <dbReference type="ChEBI" id="CHEBI:57288"/>
    </ligand>
</feature>
<feature type="binding site" evidence="1">
    <location>
        <begin position="167"/>
        <end position="176"/>
    </location>
    <ligand>
        <name>acetyl-CoA</name>
        <dbReference type="ChEBI" id="CHEBI:57288"/>
    </ligand>
</feature>
<feature type="site" description="Crucial for catalytic activity" evidence="1">
    <location>
        <position position="60"/>
    </location>
</feature>